<reference key="1">
    <citation type="journal article" date="2000" name="Science">
        <title>Complete genome sequence of Neisseria meningitidis serogroup B strain MC58.</title>
        <authorList>
            <person name="Tettelin H."/>
            <person name="Saunders N.J."/>
            <person name="Heidelberg J.F."/>
            <person name="Jeffries A.C."/>
            <person name="Nelson K.E."/>
            <person name="Eisen J.A."/>
            <person name="Ketchum K.A."/>
            <person name="Hood D.W."/>
            <person name="Peden J.F."/>
            <person name="Dodson R.J."/>
            <person name="Nelson W.C."/>
            <person name="Gwinn M.L."/>
            <person name="DeBoy R.T."/>
            <person name="Peterson J.D."/>
            <person name="Hickey E.K."/>
            <person name="Haft D.H."/>
            <person name="Salzberg S.L."/>
            <person name="White O."/>
            <person name="Fleischmann R.D."/>
            <person name="Dougherty B.A."/>
            <person name="Mason T.M."/>
            <person name="Ciecko A."/>
            <person name="Parksey D.S."/>
            <person name="Blair E."/>
            <person name="Cittone H."/>
            <person name="Clark E.B."/>
            <person name="Cotton M.D."/>
            <person name="Utterback T.R."/>
            <person name="Khouri H.M."/>
            <person name="Qin H."/>
            <person name="Vamathevan J.J."/>
            <person name="Gill J."/>
            <person name="Scarlato V."/>
            <person name="Masignani V."/>
            <person name="Pizza M."/>
            <person name="Grandi G."/>
            <person name="Sun L."/>
            <person name="Smith H.O."/>
            <person name="Fraser C.M."/>
            <person name="Moxon E.R."/>
            <person name="Rappuoli R."/>
            <person name="Venter J.C."/>
        </authorList>
    </citation>
    <scope>NUCLEOTIDE SEQUENCE [LARGE SCALE GENOMIC DNA]</scope>
    <source>
        <strain>ATCC BAA-335 / MC58</strain>
    </source>
</reference>
<accession>P0A0U7</accession>
<accession>P49980</accession>
<gene>
    <name evidence="1" type="primary">adk</name>
    <name type="ordered locus">NMB0823</name>
</gene>
<name>KAD_NEIMB</name>
<proteinExistence type="inferred from homology"/>
<organism>
    <name type="scientific">Neisseria meningitidis serogroup B (strain ATCC BAA-335 / MC58)</name>
    <dbReference type="NCBI Taxonomy" id="122586"/>
    <lineage>
        <taxon>Bacteria</taxon>
        <taxon>Pseudomonadati</taxon>
        <taxon>Pseudomonadota</taxon>
        <taxon>Betaproteobacteria</taxon>
        <taxon>Neisseriales</taxon>
        <taxon>Neisseriaceae</taxon>
        <taxon>Neisseria</taxon>
    </lineage>
</organism>
<feature type="chain" id="PRO_0000158813" description="Adenylate kinase">
    <location>
        <begin position="1"/>
        <end position="215"/>
    </location>
</feature>
<feature type="region of interest" description="NMP" evidence="1">
    <location>
        <begin position="30"/>
        <end position="59"/>
    </location>
</feature>
<feature type="region of interest" description="LID" evidence="1">
    <location>
        <begin position="122"/>
        <end position="159"/>
    </location>
</feature>
<feature type="binding site" evidence="1">
    <location>
        <begin position="10"/>
        <end position="15"/>
    </location>
    <ligand>
        <name>ATP</name>
        <dbReference type="ChEBI" id="CHEBI:30616"/>
    </ligand>
</feature>
<feature type="binding site" evidence="1">
    <location>
        <position position="31"/>
    </location>
    <ligand>
        <name>AMP</name>
        <dbReference type="ChEBI" id="CHEBI:456215"/>
    </ligand>
</feature>
<feature type="binding site" evidence="1">
    <location>
        <position position="36"/>
    </location>
    <ligand>
        <name>AMP</name>
        <dbReference type="ChEBI" id="CHEBI:456215"/>
    </ligand>
</feature>
<feature type="binding site" evidence="1">
    <location>
        <begin position="57"/>
        <end position="59"/>
    </location>
    <ligand>
        <name>AMP</name>
        <dbReference type="ChEBI" id="CHEBI:456215"/>
    </ligand>
</feature>
<feature type="binding site" evidence="1">
    <location>
        <begin position="85"/>
        <end position="88"/>
    </location>
    <ligand>
        <name>AMP</name>
        <dbReference type="ChEBI" id="CHEBI:456215"/>
    </ligand>
</feature>
<feature type="binding site" evidence="1">
    <location>
        <position position="92"/>
    </location>
    <ligand>
        <name>AMP</name>
        <dbReference type="ChEBI" id="CHEBI:456215"/>
    </ligand>
</feature>
<feature type="binding site" evidence="1">
    <location>
        <position position="123"/>
    </location>
    <ligand>
        <name>ATP</name>
        <dbReference type="ChEBI" id="CHEBI:30616"/>
    </ligand>
</feature>
<feature type="binding site" evidence="1">
    <location>
        <begin position="132"/>
        <end position="133"/>
    </location>
    <ligand>
        <name>ATP</name>
        <dbReference type="ChEBI" id="CHEBI:30616"/>
    </ligand>
</feature>
<feature type="binding site" evidence="1">
    <location>
        <position position="156"/>
    </location>
    <ligand>
        <name>AMP</name>
        <dbReference type="ChEBI" id="CHEBI:456215"/>
    </ligand>
</feature>
<feature type="binding site" evidence="1">
    <location>
        <position position="167"/>
    </location>
    <ligand>
        <name>AMP</name>
        <dbReference type="ChEBI" id="CHEBI:456215"/>
    </ligand>
</feature>
<feature type="binding site" evidence="1">
    <location>
        <position position="200"/>
    </location>
    <ligand>
        <name>ATP</name>
        <dbReference type="ChEBI" id="CHEBI:30616"/>
    </ligand>
</feature>
<sequence length="215" mass="23190">MKALLLGAPGAGKGTQAQFITAAFGIPQISTGDMLRAAIKAGTPLGLEAKKIIDEGGLVRDDIIIGMVKERIAQDDCKNGFLFDGFPRTLAQAEAMVEAGVDLDAVVEIDVPDSVIVDRMSGRRVHLASGRTYHVTYNPPKVEGKDDVTGEDLIQRDDDKEETVKKRLAVYHEQTEVLVDFYSKLEGEHAPKYIKVDGTQAVEAVKAEVLGALGK</sequence>
<comment type="function">
    <text evidence="1">Catalyzes the reversible transfer of the terminal phosphate group between ATP and AMP. Plays an important role in cellular energy homeostasis and in adenine nucleotide metabolism.</text>
</comment>
<comment type="catalytic activity">
    <reaction evidence="1">
        <text>AMP + ATP = 2 ADP</text>
        <dbReference type="Rhea" id="RHEA:12973"/>
        <dbReference type="ChEBI" id="CHEBI:30616"/>
        <dbReference type="ChEBI" id="CHEBI:456215"/>
        <dbReference type="ChEBI" id="CHEBI:456216"/>
        <dbReference type="EC" id="2.7.4.3"/>
    </reaction>
</comment>
<comment type="pathway">
    <text evidence="1">Purine metabolism; AMP biosynthesis via salvage pathway; AMP from ADP: step 1/1.</text>
</comment>
<comment type="subunit">
    <text evidence="1">Monomer.</text>
</comment>
<comment type="subcellular location">
    <subcellularLocation>
        <location evidence="1">Cytoplasm</location>
    </subcellularLocation>
</comment>
<comment type="domain">
    <text evidence="1">Consists of three domains, a large central CORE domain and two small peripheral domains, NMPbind and LID, which undergo movements during catalysis. The LID domain closes over the site of phosphoryl transfer upon ATP binding. Assembling and dissambling the active center during each catalytic cycle provides an effective means to prevent ATP hydrolysis.</text>
</comment>
<comment type="similarity">
    <text evidence="1">Belongs to the adenylate kinase family.</text>
</comment>
<keyword id="KW-0067">ATP-binding</keyword>
<keyword id="KW-0963">Cytoplasm</keyword>
<keyword id="KW-0418">Kinase</keyword>
<keyword id="KW-0545">Nucleotide biosynthesis</keyword>
<keyword id="KW-0547">Nucleotide-binding</keyword>
<keyword id="KW-1185">Reference proteome</keyword>
<keyword id="KW-0808">Transferase</keyword>
<protein>
    <recommendedName>
        <fullName evidence="1">Adenylate kinase</fullName>
        <shortName evidence="1">AK</shortName>
        <ecNumber evidence="1">2.7.4.3</ecNumber>
    </recommendedName>
    <alternativeName>
        <fullName evidence="1">ATP-AMP transphosphorylase</fullName>
    </alternativeName>
    <alternativeName>
        <fullName evidence="1">ATP:AMP phosphotransferase</fullName>
    </alternativeName>
    <alternativeName>
        <fullName evidence="1">Adenylate monophosphate kinase</fullName>
    </alternativeName>
</protein>
<dbReference type="EC" id="2.7.4.3" evidence="1"/>
<dbReference type="EMBL" id="AE002098">
    <property type="protein sequence ID" value="AAF41236.1"/>
    <property type="molecule type" value="Genomic_DNA"/>
</dbReference>
<dbReference type="PIR" id="F81154">
    <property type="entry name" value="F81154"/>
</dbReference>
<dbReference type="RefSeq" id="NP_273865.1">
    <property type="nucleotide sequence ID" value="NC_003112.2"/>
</dbReference>
<dbReference type="RefSeq" id="WP_002222696.1">
    <property type="nucleotide sequence ID" value="NC_003112.2"/>
</dbReference>
<dbReference type="SMR" id="P0A0U7"/>
<dbReference type="FunCoup" id="P0A0U7">
    <property type="interactions" value="528"/>
</dbReference>
<dbReference type="STRING" id="122586.NMB0823"/>
<dbReference type="PaxDb" id="122586-NMB0823"/>
<dbReference type="KEGG" id="nme:NMB0823"/>
<dbReference type="PATRIC" id="fig|122586.8.peg.1034"/>
<dbReference type="HOGENOM" id="CLU_032354_1_2_4"/>
<dbReference type="InParanoid" id="P0A0U7"/>
<dbReference type="OrthoDB" id="9805030at2"/>
<dbReference type="UniPathway" id="UPA00588">
    <property type="reaction ID" value="UER00649"/>
</dbReference>
<dbReference type="Proteomes" id="UP000000425">
    <property type="component" value="Chromosome"/>
</dbReference>
<dbReference type="GO" id="GO:0005737">
    <property type="term" value="C:cytoplasm"/>
    <property type="evidence" value="ECO:0000318"/>
    <property type="project" value="GO_Central"/>
</dbReference>
<dbReference type="GO" id="GO:0005829">
    <property type="term" value="C:cytosol"/>
    <property type="evidence" value="ECO:0000318"/>
    <property type="project" value="GO_Central"/>
</dbReference>
<dbReference type="GO" id="GO:0004017">
    <property type="term" value="F:adenylate kinase activity"/>
    <property type="evidence" value="ECO:0000318"/>
    <property type="project" value="GO_Central"/>
</dbReference>
<dbReference type="GO" id="GO:0005524">
    <property type="term" value="F:ATP binding"/>
    <property type="evidence" value="ECO:0007669"/>
    <property type="project" value="UniProtKB-UniRule"/>
</dbReference>
<dbReference type="GO" id="GO:0004550">
    <property type="term" value="F:nucleoside diphosphate kinase activity"/>
    <property type="evidence" value="ECO:0000318"/>
    <property type="project" value="GO_Central"/>
</dbReference>
<dbReference type="GO" id="GO:0044209">
    <property type="term" value="P:AMP salvage"/>
    <property type="evidence" value="ECO:0007669"/>
    <property type="project" value="UniProtKB-UniRule"/>
</dbReference>
<dbReference type="GO" id="GO:0009132">
    <property type="term" value="P:nucleoside diphosphate metabolic process"/>
    <property type="evidence" value="ECO:0000318"/>
    <property type="project" value="GO_Central"/>
</dbReference>
<dbReference type="GO" id="GO:0009123">
    <property type="term" value="P:nucleoside monophosphate metabolic process"/>
    <property type="evidence" value="ECO:0000318"/>
    <property type="project" value="GO_Central"/>
</dbReference>
<dbReference type="CDD" id="cd01428">
    <property type="entry name" value="ADK"/>
    <property type="match status" value="1"/>
</dbReference>
<dbReference type="FunFam" id="3.40.50.300:FF:000106">
    <property type="entry name" value="Adenylate kinase mitochondrial"/>
    <property type="match status" value="1"/>
</dbReference>
<dbReference type="Gene3D" id="3.40.50.300">
    <property type="entry name" value="P-loop containing nucleotide triphosphate hydrolases"/>
    <property type="match status" value="1"/>
</dbReference>
<dbReference type="HAMAP" id="MF_00235">
    <property type="entry name" value="Adenylate_kinase_Adk"/>
    <property type="match status" value="1"/>
</dbReference>
<dbReference type="InterPro" id="IPR006259">
    <property type="entry name" value="Adenyl_kin_sub"/>
</dbReference>
<dbReference type="InterPro" id="IPR000850">
    <property type="entry name" value="Adenylat/UMP-CMP_kin"/>
</dbReference>
<dbReference type="InterPro" id="IPR033690">
    <property type="entry name" value="Adenylat_kinase_CS"/>
</dbReference>
<dbReference type="InterPro" id="IPR007862">
    <property type="entry name" value="Adenylate_kinase_lid-dom"/>
</dbReference>
<dbReference type="InterPro" id="IPR027417">
    <property type="entry name" value="P-loop_NTPase"/>
</dbReference>
<dbReference type="NCBIfam" id="TIGR01351">
    <property type="entry name" value="adk"/>
    <property type="match status" value="1"/>
</dbReference>
<dbReference type="NCBIfam" id="NF001379">
    <property type="entry name" value="PRK00279.1-1"/>
    <property type="match status" value="1"/>
</dbReference>
<dbReference type="NCBIfam" id="NF001380">
    <property type="entry name" value="PRK00279.1-2"/>
    <property type="match status" value="1"/>
</dbReference>
<dbReference type="NCBIfam" id="NF001381">
    <property type="entry name" value="PRK00279.1-3"/>
    <property type="match status" value="1"/>
</dbReference>
<dbReference type="PANTHER" id="PTHR23359">
    <property type="entry name" value="NUCLEOTIDE KINASE"/>
    <property type="match status" value="1"/>
</dbReference>
<dbReference type="Pfam" id="PF00406">
    <property type="entry name" value="ADK"/>
    <property type="match status" value="1"/>
</dbReference>
<dbReference type="Pfam" id="PF05191">
    <property type="entry name" value="ADK_lid"/>
    <property type="match status" value="1"/>
</dbReference>
<dbReference type="PRINTS" id="PR00094">
    <property type="entry name" value="ADENYLTKNASE"/>
</dbReference>
<dbReference type="SUPFAM" id="SSF52540">
    <property type="entry name" value="P-loop containing nucleoside triphosphate hydrolases"/>
    <property type="match status" value="1"/>
</dbReference>
<dbReference type="PROSITE" id="PS00113">
    <property type="entry name" value="ADENYLATE_KINASE"/>
    <property type="match status" value="1"/>
</dbReference>
<evidence type="ECO:0000255" key="1">
    <source>
        <dbReference type="HAMAP-Rule" id="MF_00235"/>
    </source>
</evidence>